<organism>
    <name type="scientific">Schizosaccharomyces pombe (strain 972 / ATCC 24843)</name>
    <name type="common">Fission yeast</name>
    <dbReference type="NCBI Taxonomy" id="284812"/>
    <lineage>
        <taxon>Eukaryota</taxon>
        <taxon>Fungi</taxon>
        <taxon>Dikarya</taxon>
        <taxon>Ascomycota</taxon>
        <taxon>Taphrinomycotina</taxon>
        <taxon>Schizosaccharomycetes</taxon>
        <taxon>Schizosaccharomycetales</taxon>
        <taxon>Schizosaccharomycetaceae</taxon>
        <taxon>Schizosaccharomyces</taxon>
    </lineage>
</organism>
<sequence length="421" mass="47067">MNENQKSFDSDKSESEDEQKNGRVKVRSRKTDDNEGYTWEGEYQRSWDIVQEDAEGSLVGVIAGLIQSGKRKRLLRDTTPLQRGIIRHMVLVLDLSNSMEERDFHHKRFDLQIKYASEFVLEFFEQNPISQLSIIGVMDGIAHRITDLHGNPQSHIQKLKSLRDCSGNFSLQNALEMARASLSHIASHGTREVLIIFGSILSSDPGDIFKTIDALVHDSIRVRIVGLAAEVAICKEICNKTNSSTKNAYGVVISEQHFRELLLESTIPPATDSAKTTDASLVMMGFPSKVVEQLPSLCACHSIPSRGGFHCPRCKAKVCTLPIECPSCSLVLILSTHLARSYHHLFPLKNWSEIPWSANPKSTHCFACQLPFPKPPVSPFDESTSSMRYACPSCKNHFCLDCDVFAHEQLHECYGCQCSGN</sequence>
<dbReference type="EMBL" id="AF017646">
    <property type="protein sequence ID" value="AAC29144.1"/>
    <property type="molecule type" value="Genomic_DNA"/>
</dbReference>
<dbReference type="EMBL" id="CU329672">
    <property type="protein sequence ID" value="CAA20673.1"/>
    <property type="molecule type" value="Genomic_DNA"/>
</dbReference>
<dbReference type="EMBL" id="AB016221">
    <property type="protein sequence ID" value="BAA31745.1"/>
    <property type="molecule type" value="mRNA"/>
</dbReference>
<dbReference type="PIR" id="T43534">
    <property type="entry name" value="T43534"/>
</dbReference>
<dbReference type="RefSeq" id="NP_587800.1">
    <property type="nucleotide sequence ID" value="NM_001022793.2"/>
</dbReference>
<dbReference type="SMR" id="O74995"/>
<dbReference type="BioGRID" id="275765">
    <property type="interactions" value="4"/>
</dbReference>
<dbReference type="FunCoup" id="O74995">
    <property type="interactions" value="385"/>
</dbReference>
<dbReference type="IntAct" id="O74995">
    <property type="interactions" value="1"/>
</dbReference>
<dbReference type="STRING" id="284812.O74995"/>
<dbReference type="iPTMnet" id="O74995"/>
<dbReference type="PaxDb" id="4896-SPCC1682.07.1"/>
<dbReference type="EnsemblFungi" id="SPCC1682.07.1">
    <property type="protein sequence ID" value="SPCC1682.07.1:pep"/>
    <property type="gene ID" value="SPCC1682.07"/>
</dbReference>
<dbReference type="GeneID" id="2539194"/>
<dbReference type="KEGG" id="spo:2539194"/>
<dbReference type="PomBase" id="SPCC1682.07">
    <property type="gene designation" value="ssl1"/>
</dbReference>
<dbReference type="VEuPathDB" id="FungiDB:SPCC1682.07"/>
<dbReference type="eggNOG" id="KOG2807">
    <property type="taxonomic scope" value="Eukaryota"/>
</dbReference>
<dbReference type="HOGENOM" id="CLU_028556_1_1_1"/>
<dbReference type="InParanoid" id="O74995"/>
<dbReference type="OMA" id="INWVEVP"/>
<dbReference type="PhylomeDB" id="O74995"/>
<dbReference type="Reactome" id="R-SPO-113418">
    <property type="pathway name" value="Formation of the Early Elongation Complex"/>
</dbReference>
<dbReference type="Reactome" id="R-SPO-5696395">
    <property type="pathway name" value="Formation of Incision Complex in GG-NER"/>
</dbReference>
<dbReference type="Reactome" id="R-SPO-5696400">
    <property type="pathway name" value="Dual Incision in GG-NER"/>
</dbReference>
<dbReference type="Reactome" id="R-SPO-674695">
    <property type="pathway name" value="RNA Polymerase II Pre-transcription Events"/>
</dbReference>
<dbReference type="Reactome" id="R-SPO-6781823">
    <property type="pathway name" value="Formation of TC-NER Pre-Incision Complex"/>
</dbReference>
<dbReference type="Reactome" id="R-SPO-6782135">
    <property type="pathway name" value="Dual incision in TC-NER"/>
</dbReference>
<dbReference type="Reactome" id="R-SPO-6782210">
    <property type="pathway name" value="Gap-filling DNA repair synthesis and ligation in TC-NER"/>
</dbReference>
<dbReference type="Reactome" id="R-SPO-6796648">
    <property type="pathway name" value="TP53 Regulates Transcription of DNA Repair Genes"/>
</dbReference>
<dbReference type="Reactome" id="R-SPO-72086">
    <property type="pathway name" value="mRNA Capping"/>
</dbReference>
<dbReference type="Reactome" id="R-SPO-73772">
    <property type="pathway name" value="RNA Polymerase I Promoter Escape"/>
</dbReference>
<dbReference type="Reactome" id="R-SPO-73776">
    <property type="pathway name" value="RNA Polymerase II Promoter Escape"/>
</dbReference>
<dbReference type="Reactome" id="R-SPO-73779">
    <property type="pathway name" value="RNA Polymerase II Transcription Pre-Initiation And Promoter Opening"/>
</dbReference>
<dbReference type="Reactome" id="R-SPO-75953">
    <property type="pathway name" value="RNA Polymerase II Transcription Initiation"/>
</dbReference>
<dbReference type="Reactome" id="R-SPO-76042">
    <property type="pathway name" value="RNA Polymerase II Transcription Initiation And Promoter Clearance"/>
</dbReference>
<dbReference type="Reactome" id="R-SPO-77075">
    <property type="pathway name" value="RNA Pol II CTD phosphorylation and interaction with CE"/>
</dbReference>
<dbReference type="PRO" id="PR:O74995"/>
<dbReference type="Proteomes" id="UP000002485">
    <property type="component" value="Chromosome III"/>
</dbReference>
<dbReference type="GO" id="GO:0005829">
    <property type="term" value="C:cytosol"/>
    <property type="evidence" value="ECO:0007005"/>
    <property type="project" value="PomBase"/>
</dbReference>
<dbReference type="GO" id="GO:0005634">
    <property type="term" value="C:nucleus"/>
    <property type="evidence" value="ECO:0007005"/>
    <property type="project" value="PomBase"/>
</dbReference>
<dbReference type="GO" id="GO:0000439">
    <property type="term" value="C:transcription factor TFIIH core complex"/>
    <property type="evidence" value="ECO:0000266"/>
    <property type="project" value="PomBase"/>
</dbReference>
<dbReference type="GO" id="GO:0005675">
    <property type="term" value="C:transcription factor TFIIH holo complex"/>
    <property type="evidence" value="ECO:0000318"/>
    <property type="project" value="GO_Central"/>
</dbReference>
<dbReference type="GO" id="GO:0016251">
    <property type="term" value="F:RNA polymerase II general transcription initiation factor activity"/>
    <property type="evidence" value="ECO:0000314"/>
    <property type="project" value="PomBase"/>
</dbReference>
<dbReference type="GO" id="GO:0008270">
    <property type="term" value="F:zinc ion binding"/>
    <property type="evidence" value="ECO:0007669"/>
    <property type="project" value="UniProtKB-KW"/>
</dbReference>
<dbReference type="GO" id="GO:0006289">
    <property type="term" value="P:nucleotide-excision repair"/>
    <property type="evidence" value="ECO:0000318"/>
    <property type="project" value="GO_Central"/>
</dbReference>
<dbReference type="GO" id="GO:0006357">
    <property type="term" value="P:regulation of transcription by RNA polymerase II"/>
    <property type="evidence" value="ECO:0000318"/>
    <property type="project" value="GO_Central"/>
</dbReference>
<dbReference type="GO" id="GO:0006367">
    <property type="term" value="P:transcription initiation at RNA polymerase II promoter"/>
    <property type="evidence" value="ECO:0000314"/>
    <property type="project" value="PomBase"/>
</dbReference>
<dbReference type="CDD" id="cd20335">
    <property type="entry name" value="BRcat_RBR"/>
    <property type="match status" value="1"/>
</dbReference>
<dbReference type="CDD" id="cd01453">
    <property type="entry name" value="vWA_transcription_factor_IIH_type"/>
    <property type="match status" value="1"/>
</dbReference>
<dbReference type="FunFam" id="3.30.40.10:FF:000477">
    <property type="entry name" value="General transcription and DNA repair factor IIH"/>
    <property type="match status" value="1"/>
</dbReference>
<dbReference type="FunFam" id="3.40.50.410:FF:000015">
    <property type="entry name" value="General transcription factor IIH subunit 2"/>
    <property type="match status" value="1"/>
</dbReference>
<dbReference type="Gene3D" id="3.40.50.410">
    <property type="entry name" value="von Willebrand factor, type A domain"/>
    <property type="match status" value="1"/>
</dbReference>
<dbReference type="Gene3D" id="3.30.40.10">
    <property type="entry name" value="Zinc/RING finger domain, C3HC4 (zinc finger)"/>
    <property type="match status" value="1"/>
</dbReference>
<dbReference type="InterPro" id="IPR046349">
    <property type="entry name" value="C1-like_sf"/>
</dbReference>
<dbReference type="InterPro" id="IPR007198">
    <property type="entry name" value="Ssl1-like"/>
</dbReference>
<dbReference type="InterPro" id="IPR004595">
    <property type="entry name" value="TFIIH_C1-like_dom"/>
</dbReference>
<dbReference type="InterPro" id="IPR012170">
    <property type="entry name" value="TFIIH_SSL1/p44"/>
</dbReference>
<dbReference type="InterPro" id="IPR002035">
    <property type="entry name" value="VWF_A"/>
</dbReference>
<dbReference type="InterPro" id="IPR036465">
    <property type="entry name" value="vWFA_dom_sf"/>
</dbReference>
<dbReference type="InterPro" id="IPR013087">
    <property type="entry name" value="Znf_C2H2_type"/>
</dbReference>
<dbReference type="InterPro" id="IPR013083">
    <property type="entry name" value="Znf_RING/FYVE/PHD"/>
</dbReference>
<dbReference type="NCBIfam" id="TIGR00622">
    <property type="entry name" value="ssl1"/>
    <property type="match status" value="1"/>
</dbReference>
<dbReference type="PANTHER" id="PTHR12695">
    <property type="entry name" value="GENERAL TRANSCRIPTION FACTOR IIH SUBUNIT 2"/>
    <property type="match status" value="1"/>
</dbReference>
<dbReference type="PANTHER" id="PTHR12695:SF2">
    <property type="entry name" value="GENERAL TRANSCRIPTION FACTOR IIH SUBUNIT 2-RELATED"/>
    <property type="match status" value="1"/>
</dbReference>
<dbReference type="Pfam" id="PF07975">
    <property type="entry name" value="C1_4"/>
    <property type="match status" value="1"/>
</dbReference>
<dbReference type="Pfam" id="PF04056">
    <property type="entry name" value="Ssl1"/>
    <property type="match status" value="1"/>
</dbReference>
<dbReference type="PIRSF" id="PIRSF015919">
    <property type="entry name" value="TFIIH_SSL1"/>
    <property type="match status" value="1"/>
</dbReference>
<dbReference type="SMART" id="SM01047">
    <property type="entry name" value="C1_4"/>
    <property type="match status" value="1"/>
</dbReference>
<dbReference type="SMART" id="SM00327">
    <property type="entry name" value="VWA"/>
    <property type="match status" value="1"/>
</dbReference>
<dbReference type="SUPFAM" id="SSF57889">
    <property type="entry name" value="Cysteine-rich domain"/>
    <property type="match status" value="1"/>
</dbReference>
<dbReference type="SUPFAM" id="SSF53300">
    <property type="entry name" value="vWA-like"/>
    <property type="match status" value="1"/>
</dbReference>
<dbReference type="PROSITE" id="PS50234">
    <property type="entry name" value="VWFA"/>
    <property type="match status" value="1"/>
</dbReference>
<accession>O74995</accession>
<gene>
    <name type="primary">ssl1</name>
    <name type="synonym">tfh47</name>
    <name type="ORF">SPCC1682.07</name>
</gene>
<evidence type="ECO:0000250" key="1">
    <source>
        <dbReference type="UniProtKB" id="Q04673"/>
    </source>
</evidence>
<evidence type="ECO:0000255" key="2">
    <source>
        <dbReference type="PROSITE-ProRule" id="PRU00219"/>
    </source>
</evidence>
<evidence type="ECO:0000256" key="3">
    <source>
        <dbReference type="SAM" id="MobiDB-lite"/>
    </source>
</evidence>
<evidence type="ECO:0000269" key="4">
    <source>
    </source>
</evidence>
<evidence type="ECO:0000269" key="5">
    <source>
    </source>
</evidence>
<evidence type="ECO:0000305" key="6"/>
<reference key="1">
    <citation type="journal article" date="1999" name="Yeast">
        <title>Analysis of TFIIH subunit through isolation of the gene from Schizosaccharomyces pombe corresponding to that of Saccharomyces cerevisiae SSL1, reveals the presence of conserved structural motifs.</title>
        <authorList>
            <person name="Adachi N."/>
            <person name="Matsumoto M."/>
            <person name="Hasegawa S."/>
            <person name="Yamamoto T."/>
            <person name="Horikoshi M."/>
        </authorList>
    </citation>
    <scope>NUCLEOTIDE SEQUENCE [GENOMIC DNA]</scope>
    <source>
        <strain>JY741</strain>
    </source>
</reference>
<reference key="2">
    <citation type="journal article" date="2002" name="Nature">
        <title>The genome sequence of Schizosaccharomyces pombe.</title>
        <authorList>
            <person name="Wood V."/>
            <person name="Gwilliam R."/>
            <person name="Rajandream M.A."/>
            <person name="Lyne M.H."/>
            <person name="Lyne R."/>
            <person name="Stewart A."/>
            <person name="Sgouros J.G."/>
            <person name="Peat N."/>
            <person name="Hayles J."/>
            <person name="Baker S.G."/>
            <person name="Basham D."/>
            <person name="Bowman S."/>
            <person name="Brooks K."/>
            <person name="Brown D."/>
            <person name="Brown S."/>
            <person name="Chillingworth T."/>
            <person name="Churcher C.M."/>
            <person name="Collins M."/>
            <person name="Connor R."/>
            <person name="Cronin A."/>
            <person name="Davis P."/>
            <person name="Feltwell T."/>
            <person name="Fraser A."/>
            <person name="Gentles S."/>
            <person name="Goble A."/>
            <person name="Hamlin N."/>
            <person name="Harris D.E."/>
            <person name="Hidalgo J."/>
            <person name="Hodgson G."/>
            <person name="Holroyd S."/>
            <person name="Hornsby T."/>
            <person name="Howarth S."/>
            <person name="Huckle E.J."/>
            <person name="Hunt S."/>
            <person name="Jagels K."/>
            <person name="James K.D."/>
            <person name="Jones L."/>
            <person name="Jones M."/>
            <person name="Leather S."/>
            <person name="McDonald S."/>
            <person name="McLean J."/>
            <person name="Mooney P."/>
            <person name="Moule S."/>
            <person name="Mungall K.L."/>
            <person name="Murphy L.D."/>
            <person name="Niblett D."/>
            <person name="Odell C."/>
            <person name="Oliver K."/>
            <person name="O'Neil S."/>
            <person name="Pearson D."/>
            <person name="Quail M.A."/>
            <person name="Rabbinowitsch E."/>
            <person name="Rutherford K.M."/>
            <person name="Rutter S."/>
            <person name="Saunders D."/>
            <person name="Seeger K."/>
            <person name="Sharp S."/>
            <person name="Skelton J."/>
            <person name="Simmonds M.N."/>
            <person name="Squares R."/>
            <person name="Squares S."/>
            <person name="Stevens K."/>
            <person name="Taylor K."/>
            <person name="Taylor R.G."/>
            <person name="Tivey A."/>
            <person name="Walsh S.V."/>
            <person name="Warren T."/>
            <person name="Whitehead S."/>
            <person name="Woodward J.R."/>
            <person name="Volckaert G."/>
            <person name="Aert R."/>
            <person name="Robben J."/>
            <person name="Grymonprez B."/>
            <person name="Weltjens I."/>
            <person name="Vanstreels E."/>
            <person name="Rieger M."/>
            <person name="Schaefer M."/>
            <person name="Mueller-Auer S."/>
            <person name="Gabel C."/>
            <person name="Fuchs M."/>
            <person name="Duesterhoeft A."/>
            <person name="Fritzc C."/>
            <person name="Holzer E."/>
            <person name="Moestl D."/>
            <person name="Hilbert H."/>
            <person name="Borzym K."/>
            <person name="Langer I."/>
            <person name="Beck A."/>
            <person name="Lehrach H."/>
            <person name="Reinhardt R."/>
            <person name="Pohl T.M."/>
            <person name="Eger P."/>
            <person name="Zimmermann W."/>
            <person name="Wedler H."/>
            <person name="Wambutt R."/>
            <person name="Purnelle B."/>
            <person name="Goffeau A."/>
            <person name="Cadieu E."/>
            <person name="Dreano S."/>
            <person name="Gloux S."/>
            <person name="Lelaure V."/>
            <person name="Mottier S."/>
            <person name="Galibert F."/>
            <person name="Aves S.J."/>
            <person name="Xiang Z."/>
            <person name="Hunt C."/>
            <person name="Moore K."/>
            <person name="Hurst S.M."/>
            <person name="Lucas M."/>
            <person name="Rochet M."/>
            <person name="Gaillardin C."/>
            <person name="Tallada V.A."/>
            <person name="Garzon A."/>
            <person name="Thode G."/>
            <person name="Daga R.R."/>
            <person name="Cruzado L."/>
            <person name="Jimenez J."/>
            <person name="Sanchez M."/>
            <person name="del Rey F."/>
            <person name="Benito J."/>
            <person name="Dominguez A."/>
            <person name="Revuelta J.L."/>
            <person name="Moreno S."/>
            <person name="Armstrong J."/>
            <person name="Forsburg S.L."/>
            <person name="Cerutti L."/>
            <person name="Lowe T."/>
            <person name="McCombie W.R."/>
            <person name="Paulsen I."/>
            <person name="Potashkin J."/>
            <person name="Shpakovski G.V."/>
            <person name="Ussery D."/>
            <person name="Barrell B.G."/>
            <person name="Nurse P."/>
        </authorList>
    </citation>
    <scope>NUCLEOTIDE SEQUENCE [LARGE SCALE GENOMIC DNA]</scope>
    <source>
        <strain>972 / ATCC 24843</strain>
    </source>
</reference>
<reference key="3">
    <citation type="submission" date="1998-07" db="EMBL/GenBank/DDBJ databases">
        <title>S.pombe SSL1 homolog.</title>
        <authorList>
            <person name="Kawamukai M."/>
        </authorList>
    </citation>
    <scope>NUCLEOTIDE SEQUENCE [MRNA] OF 30-421</scope>
</reference>
<reference key="4">
    <citation type="journal article" date="2003" name="J. Biol. Chem.">
        <title>Mediator influences Schizosaccharomyces pombe RNA polymerase II-dependent transcription in vitro.</title>
        <authorList>
            <person name="Spaehr H."/>
            <person name="Khorosjutina O."/>
            <person name="Baraznenok V."/>
            <person name="Linder T."/>
            <person name="Samuelsen C.O."/>
            <person name="Hermand D."/>
            <person name="Maekelae T.P."/>
            <person name="Holmberg S."/>
            <person name="Gustafsson C.M."/>
        </authorList>
    </citation>
    <scope>SUBUNIT</scope>
</reference>
<reference key="5">
    <citation type="journal article" date="2008" name="J. Proteome Res.">
        <title>Phosphoproteome analysis of fission yeast.</title>
        <authorList>
            <person name="Wilson-Grady J.T."/>
            <person name="Villen J."/>
            <person name="Gygi S.P."/>
        </authorList>
    </citation>
    <scope>PHOSPHORYLATION [LARGE SCALE ANALYSIS] AT SER-15</scope>
    <scope>IDENTIFICATION BY MASS SPECTROMETRY</scope>
</reference>
<comment type="function">
    <text evidence="1">Component of the general transcription and DNA repair factor IIH (TFIIH) core complex, which is involved in general and transcription-coupled nucleotide excision repair (NER) of damaged DNA and, when complexed to TFIIK, in RNA transcription by RNA polymerase II. In NER, TFIIH acts by opening DNA around the lesion to allow the excision of the damaged oligonucleotide and its replacement by a new DNA fragment. In transcription, TFIIH has an essential role in transcription initiation. When the pre-initiation complex (PIC) has been established, TFIIH is required for promoter opening and promoter escape. Phosphorylation of the C-terminal tail (CTD) of the largest subunit of RNA polymerase II by the kinase module TFIIK controls the initiation of transcription.</text>
</comment>
<comment type="subunit">
    <text evidence="4">Component of the 7-subunit TFIIH core complex composed of XPB/ptr8, XPD/rad15, ssl1, tfb1, tfb2, tfb4 and tfb5, which is active in NER. The core complex associates with the 3-subunit CTD-kinase module TFIIK composed of mcs2/cyclin H, mcs6/cdk7 and pmh1/tfb3 to form the 10-subunit holoenzyme (holo-TFIIH) active in transcription.</text>
</comment>
<comment type="subcellular location">
    <subcellularLocation>
        <location evidence="6">Nucleus</location>
    </subcellularLocation>
</comment>
<comment type="similarity">
    <text evidence="6">Belongs to the GTF2H2 family.</text>
</comment>
<keyword id="KW-0227">DNA damage</keyword>
<keyword id="KW-0234">DNA repair</keyword>
<keyword id="KW-0479">Metal-binding</keyword>
<keyword id="KW-0539">Nucleus</keyword>
<keyword id="KW-0597">Phosphoprotein</keyword>
<keyword id="KW-1185">Reference proteome</keyword>
<keyword id="KW-0804">Transcription</keyword>
<keyword id="KW-0805">Transcription regulation</keyword>
<keyword id="KW-0862">Zinc</keyword>
<keyword id="KW-0863">Zinc-finger</keyword>
<name>TFH47_SCHPO</name>
<protein>
    <recommendedName>
        <fullName>General transcription and DNA repair factor IIH subunit ssl1</fullName>
        <shortName>TFIIH subunit ssl1</shortName>
    </recommendedName>
    <alternativeName>
        <fullName>RNA polymerase II transcription factor B subunit ssl1</fullName>
        <shortName>TFB subunit ssl1</shortName>
    </alternativeName>
    <alternativeName>
        <fullName>Suppressor of stem-loop protein 1 homolog</fullName>
        <shortName>SSL1 homolog</shortName>
    </alternativeName>
    <alternativeName>
        <fullName>TFIIH basal transcription factor complex p47 subunit</fullName>
    </alternativeName>
</protein>
<proteinExistence type="evidence at protein level"/>
<feature type="chain" id="PRO_0000046856" description="General transcription and DNA repair factor IIH subunit ssl1">
    <location>
        <begin position="1"/>
        <end position="421"/>
    </location>
</feature>
<feature type="domain" description="VWFA" evidence="2">
    <location>
        <begin position="88"/>
        <end position="267"/>
    </location>
</feature>
<feature type="zinc finger region" description="C4-type">
    <location>
        <begin position="311"/>
        <end position="328"/>
    </location>
</feature>
<feature type="region of interest" description="Disordered" evidence="3">
    <location>
        <begin position="1"/>
        <end position="35"/>
    </location>
</feature>
<feature type="compositionally biased region" description="Basic and acidic residues" evidence="3">
    <location>
        <begin position="1"/>
        <end position="21"/>
    </location>
</feature>
<feature type="modified residue" description="Phosphoserine" evidence="5">
    <location>
        <position position="15"/>
    </location>
</feature>